<feature type="initiator methionine" description="Removed" evidence="1">
    <location>
        <position position="1"/>
    </location>
</feature>
<feature type="chain" id="PRO_0000439458" description="Microfibrillar-associated protein 1B">
    <location>
        <begin position="2"/>
        <end position="439"/>
    </location>
</feature>
<feature type="region of interest" description="Disordered" evidence="2">
    <location>
        <begin position="1"/>
        <end position="200"/>
    </location>
</feature>
<feature type="compositionally biased region" description="Basic and acidic residues" evidence="2">
    <location>
        <begin position="23"/>
        <end position="34"/>
    </location>
</feature>
<feature type="compositionally biased region" description="Basic and acidic residues" evidence="2">
    <location>
        <begin position="61"/>
        <end position="70"/>
    </location>
</feature>
<feature type="compositionally biased region" description="Acidic residues" evidence="2">
    <location>
        <begin position="71"/>
        <end position="81"/>
    </location>
</feature>
<feature type="compositionally biased region" description="Acidic residues" evidence="2">
    <location>
        <begin position="112"/>
        <end position="122"/>
    </location>
</feature>
<feature type="compositionally biased region" description="Acidic residues" evidence="2">
    <location>
        <begin position="131"/>
        <end position="144"/>
    </location>
</feature>
<feature type="compositionally biased region" description="Basic and acidic residues" evidence="2">
    <location>
        <begin position="145"/>
        <end position="163"/>
    </location>
</feature>
<feature type="compositionally biased region" description="Acidic residues" evidence="2">
    <location>
        <begin position="178"/>
        <end position="195"/>
    </location>
</feature>
<feature type="modified residue" description="N-acetylserine" evidence="1">
    <location>
        <position position="2"/>
    </location>
</feature>
<feature type="modified residue" description="Phosphoserine" evidence="9 12">
    <location>
        <position position="52"/>
    </location>
</feature>
<feature type="modified residue" description="Phosphoserine" evidence="9 12">
    <location>
        <position position="53"/>
    </location>
</feature>
<feature type="modified residue" description="Phosphoserine" evidence="1">
    <location>
        <position position="94"/>
    </location>
</feature>
<feature type="modified residue" description="Phosphoserine" evidence="9 12">
    <location>
        <position position="116"/>
    </location>
</feature>
<feature type="modified residue" description="Phosphoserine" evidence="1">
    <location>
        <position position="118"/>
    </location>
</feature>
<feature type="modified residue" description="Phosphoserine" evidence="8 9 11 12">
    <location>
        <position position="132"/>
    </location>
</feature>
<feature type="modified residue" description="Phosphoserine" evidence="8 11">
    <location>
        <position position="133"/>
    </location>
</feature>
<feature type="modified residue" description="Phosphothreonine" evidence="10 12">
    <location>
        <position position="267"/>
    </location>
</feature>
<feature type="modified residue" description="Phosphoserine" evidence="1">
    <location>
        <position position="361"/>
    </location>
</feature>
<feature type="modified residue" description="Phosphoserine" evidence="1">
    <location>
        <position position="432"/>
    </location>
</feature>
<feature type="cross-link" description="Glycyl lysine isopeptide (Lys-Gly) (interchain with G-Cter in SUMO2)" evidence="1">
    <location>
        <position position="67"/>
    </location>
</feature>
<feature type="cross-link" description="Glycyl lysine isopeptide (Lys-Gly) (interchain with G-Cter in SUMO2)" evidence="1">
    <location>
        <position position="249"/>
    </location>
</feature>
<feature type="cross-link" description="Glycyl lysine isopeptide (Lys-Gly) (interchain with G-Cter in SUMO2)" evidence="1">
    <location>
        <position position="357"/>
    </location>
</feature>
<feature type="cross-link" description="Glycyl lysine isopeptide (Lys-Gly) (interchain with G-Cter in SUMO2)" evidence="1">
    <location>
        <position position="371"/>
    </location>
</feature>
<feature type="cross-link" description="Glycyl lysine isopeptide (Lys-Gly) (interchain with G-Cter in SUMO2)" evidence="1">
    <location>
        <position position="381"/>
    </location>
</feature>
<feature type="cross-link" description="Glycyl lysine isopeptide (Lys-Gly) (interchain with G-Cter in SUMO2)" evidence="1">
    <location>
        <position position="415"/>
    </location>
</feature>
<feature type="cross-link" description="Glycyl lysine isopeptide (Lys-Gly) (interchain with G-Cter in SUMO2)" evidence="1">
    <location>
        <position position="418"/>
    </location>
</feature>
<organism>
    <name type="scientific">Mus musculus</name>
    <name type="common">Mouse</name>
    <dbReference type="NCBI Taxonomy" id="10090"/>
    <lineage>
        <taxon>Eukaryota</taxon>
        <taxon>Metazoa</taxon>
        <taxon>Chordata</taxon>
        <taxon>Craniata</taxon>
        <taxon>Vertebrata</taxon>
        <taxon>Euteleostomi</taxon>
        <taxon>Mammalia</taxon>
        <taxon>Eutheria</taxon>
        <taxon>Euarchontoglires</taxon>
        <taxon>Glires</taxon>
        <taxon>Rodentia</taxon>
        <taxon>Myomorpha</taxon>
        <taxon>Muroidea</taxon>
        <taxon>Muridae</taxon>
        <taxon>Murinae</taxon>
        <taxon>Mus</taxon>
        <taxon>Mus</taxon>
    </lineage>
</organism>
<sequence length="439" mass="51954">MSVPSALMKQPPIQSTAGAVPVRNEKGEISMEKVKVKRYVSGKRPDYAPMESSDEEDEEFQFIKKAKEQEAEPEEQEEDSSSDPRLRRLQNRISEDVEERLARHRKIVEPEVVGESDSEVEGDAWRLEREDSSEEEEEEIDDEEIERRRGMMRQRAQERKNEEMEVMEVEDEGRSGEESESESEYEEYTDSEDEMEPRLKPVFIRKKDRVTVQEREAEALKQKELEQEAKRMAEERRKYTLKIVEEETKKELEENKRSLAALDALNTDDENDEEEYEAWKVRELKRIKREREDREALEKEKAEIERMRNLTEEERRAELRANGKVITNKAVKGKYKFLQKYYHRGAFFMDEDEEVYKRDFSAPTLEDHFNKTILPKVMQVKNFGRSGRTKYTHLVDQDTTSFDSAWGQESAQNTKFFKQKAAGVRDVFERPSAKKRKTT</sequence>
<dbReference type="EMBL" id="AK018514">
    <property type="protein sequence ID" value="BAB31249.1"/>
    <property type="molecule type" value="mRNA"/>
</dbReference>
<dbReference type="EMBL" id="AK088946">
    <property type="protein sequence ID" value="BAC40667.1"/>
    <property type="molecule type" value="mRNA"/>
</dbReference>
<dbReference type="EMBL" id="BC005728">
    <property type="protein sequence ID" value="AAH05728.1"/>
    <property type="molecule type" value="mRNA"/>
</dbReference>
<dbReference type="CCDS" id="CCDS38217.1"/>
<dbReference type="RefSeq" id="NP_001075444.1">
    <property type="nucleotide sequence ID" value="NM_001081975.3"/>
</dbReference>
<dbReference type="RefSeq" id="NP_080496.1">
    <property type="nucleotide sequence ID" value="NM_026220.4"/>
</dbReference>
<dbReference type="SMR" id="C0HKD9"/>
<dbReference type="FunCoup" id="C0HKD9">
    <property type="interactions" value="2669"/>
</dbReference>
<dbReference type="iPTMnet" id="C0HKD9"/>
<dbReference type="PhosphoSitePlus" id="C0HKD9"/>
<dbReference type="jPOST" id="C0HKD9"/>
<dbReference type="ProteomicsDB" id="295892"/>
<dbReference type="Pumba" id="C0HKD9"/>
<dbReference type="DNASU" id="67532"/>
<dbReference type="Ensembl" id="ENSMUST00000056732.4">
    <property type="protein sequence ID" value="ENSMUSP00000049548.4"/>
    <property type="gene ID" value="ENSMUSG00000048222.4"/>
</dbReference>
<dbReference type="Ensembl" id="ENSMUST00000089926.6">
    <property type="protein sequence ID" value="ENSMUSP00000087372.6"/>
    <property type="gene ID" value="ENSMUSG00000068479.6"/>
</dbReference>
<dbReference type="GeneID" id="100034361"/>
<dbReference type="GeneID" id="67532"/>
<dbReference type="KEGG" id="mmu:100034361"/>
<dbReference type="KEGG" id="mmu:67532"/>
<dbReference type="AGR" id="MGI:3694697"/>
<dbReference type="CTD" id="100034361"/>
<dbReference type="CTD" id="67532"/>
<dbReference type="MGI" id="MGI:3694697">
    <property type="gene designation" value="Mfap1b"/>
</dbReference>
<dbReference type="VEuPathDB" id="HostDB:ENSMUSG00000048222"/>
<dbReference type="VEuPathDB" id="HostDB:ENSMUSG00000068479"/>
<dbReference type="GeneTree" id="ENSGT00690000102225"/>
<dbReference type="InParanoid" id="C0HKD9"/>
<dbReference type="OMA" id="FHNERAG"/>
<dbReference type="OrthoDB" id="1111734at2759"/>
<dbReference type="Reactome" id="R-MMU-72163">
    <property type="pathway name" value="mRNA Splicing - Major Pathway"/>
</dbReference>
<dbReference type="BioGRID-ORCS" id="100034361">
    <property type="hits" value="14 hits in 37 CRISPR screens"/>
</dbReference>
<dbReference type="BioGRID-ORCS" id="67532">
    <property type="hits" value="10 hits in 35 CRISPR screens"/>
</dbReference>
<dbReference type="ChiTaRS" id="Mfap1b">
    <property type="organism name" value="mouse"/>
</dbReference>
<dbReference type="PRO" id="PR:C0HKD9"/>
<dbReference type="Proteomes" id="UP000000589">
    <property type="component" value="Chromosome 2"/>
</dbReference>
<dbReference type="RNAct" id="C0HKD9">
    <property type="molecule type" value="protein"/>
</dbReference>
<dbReference type="Bgee" id="ENSMUSG00000048222">
    <property type="expression patterns" value="Expressed in animal zygote and 79 other cell types or tissues"/>
</dbReference>
<dbReference type="ExpressionAtlas" id="C0HKD9">
    <property type="expression patterns" value="baseline and differential"/>
</dbReference>
<dbReference type="GO" id="GO:0062023">
    <property type="term" value="C:collagen-containing extracellular matrix"/>
    <property type="evidence" value="ECO:0007005"/>
    <property type="project" value="BHF-UCL"/>
</dbReference>
<dbReference type="GO" id="GO:0005634">
    <property type="term" value="C:nucleus"/>
    <property type="evidence" value="ECO:0000250"/>
    <property type="project" value="UniProtKB"/>
</dbReference>
<dbReference type="GO" id="GO:0071005">
    <property type="term" value="C:U2-type precatalytic spliceosome"/>
    <property type="evidence" value="ECO:0000250"/>
    <property type="project" value="UniProtKB"/>
</dbReference>
<dbReference type="GO" id="GO:0000398">
    <property type="term" value="P:mRNA splicing, via spliceosome"/>
    <property type="evidence" value="ECO:0000250"/>
    <property type="project" value="UniProtKB"/>
</dbReference>
<dbReference type="InterPro" id="IPR033194">
    <property type="entry name" value="MFAP1"/>
</dbReference>
<dbReference type="InterPro" id="IPR009730">
    <property type="entry name" value="MFAP1_C"/>
</dbReference>
<dbReference type="PANTHER" id="PTHR15327">
    <property type="entry name" value="MICROFIBRIL-ASSOCIATED PROTEIN"/>
    <property type="match status" value="1"/>
</dbReference>
<dbReference type="Pfam" id="PF06991">
    <property type="entry name" value="MFAP1"/>
    <property type="match status" value="1"/>
</dbReference>
<name>MFA1B_MOUSE</name>
<proteinExistence type="evidence at protein level"/>
<keyword id="KW-0007">Acetylation</keyword>
<keyword id="KW-1017">Isopeptide bond</keyword>
<keyword id="KW-0507">mRNA processing</keyword>
<keyword id="KW-0508">mRNA splicing</keyword>
<keyword id="KW-0539">Nucleus</keyword>
<keyword id="KW-0597">Phosphoprotein</keyword>
<keyword id="KW-1185">Reference proteome</keyword>
<keyword id="KW-0747">Spliceosome</keyword>
<keyword id="KW-0832">Ubl conjugation</keyword>
<gene>
    <name evidence="7" type="primary">Mfap1b</name>
</gene>
<comment type="function">
    <text evidence="1">Involved in pre-mRNA splicing as a component of the spliceosome.</text>
</comment>
<comment type="subunit">
    <text evidence="1">Component of the spliceosome B complex. Interacts with PRPF38A (via N-terminal interaction domain).</text>
</comment>
<comment type="subcellular location">
    <subcellularLocation>
        <location evidence="1">Nucleus</location>
    </subcellularLocation>
</comment>
<comment type="similarity">
    <text evidence="3">Belongs to the MFAP1 family.</text>
</comment>
<reference key="1">
    <citation type="journal article" date="2005" name="Science">
        <title>The transcriptional landscape of the mammalian genome.</title>
        <authorList>
            <person name="Carninci P."/>
            <person name="Kasukawa T."/>
            <person name="Katayama S."/>
            <person name="Gough J."/>
            <person name="Frith M.C."/>
            <person name="Maeda N."/>
            <person name="Oyama R."/>
            <person name="Ravasi T."/>
            <person name="Lenhard B."/>
            <person name="Wells C."/>
            <person name="Kodzius R."/>
            <person name="Shimokawa K."/>
            <person name="Bajic V.B."/>
            <person name="Brenner S.E."/>
            <person name="Batalov S."/>
            <person name="Forrest A.R."/>
            <person name="Zavolan M."/>
            <person name="Davis M.J."/>
            <person name="Wilming L.G."/>
            <person name="Aidinis V."/>
            <person name="Allen J.E."/>
            <person name="Ambesi-Impiombato A."/>
            <person name="Apweiler R."/>
            <person name="Aturaliya R.N."/>
            <person name="Bailey T.L."/>
            <person name="Bansal M."/>
            <person name="Baxter L."/>
            <person name="Beisel K.W."/>
            <person name="Bersano T."/>
            <person name="Bono H."/>
            <person name="Chalk A.M."/>
            <person name="Chiu K.P."/>
            <person name="Choudhary V."/>
            <person name="Christoffels A."/>
            <person name="Clutterbuck D.R."/>
            <person name="Crowe M.L."/>
            <person name="Dalla E."/>
            <person name="Dalrymple B.P."/>
            <person name="de Bono B."/>
            <person name="Della Gatta G."/>
            <person name="di Bernardo D."/>
            <person name="Down T."/>
            <person name="Engstrom P."/>
            <person name="Fagiolini M."/>
            <person name="Faulkner G."/>
            <person name="Fletcher C.F."/>
            <person name="Fukushima T."/>
            <person name="Furuno M."/>
            <person name="Futaki S."/>
            <person name="Gariboldi M."/>
            <person name="Georgii-Hemming P."/>
            <person name="Gingeras T.R."/>
            <person name="Gojobori T."/>
            <person name="Green R.E."/>
            <person name="Gustincich S."/>
            <person name="Harbers M."/>
            <person name="Hayashi Y."/>
            <person name="Hensch T.K."/>
            <person name="Hirokawa N."/>
            <person name="Hill D."/>
            <person name="Huminiecki L."/>
            <person name="Iacono M."/>
            <person name="Ikeo K."/>
            <person name="Iwama A."/>
            <person name="Ishikawa T."/>
            <person name="Jakt M."/>
            <person name="Kanapin A."/>
            <person name="Katoh M."/>
            <person name="Kawasawa Y."/>
            <person name="Kelso J."/>
            <person name="Kitamura H."/>
            <person name="Kitano H."/>
            <person name="Kollias G."/>
            <person name="Krishnan S.P."/>
            <person name="Kruger A."/>
            <person name="Kummerfeld S.K."/>
            <person name="Kurochkin I.V."/>
            <person name="Lareau L.F."/>
            <person name="Lazarevic D."/>
            <person name="Lipovich L."/>
            <person name="Liu J."/>
            <person name="Liuni S."/>
            <person name="McWilliam S."/>
            <person name="Madan Babu M."/>
            <person name="Madera M."/>
            <person name="Marchionni L."/>
            <person name="Matsuda H."/>
            <person name="Matsuzawa S."/>
            <person name="Miki H."/>
            <person name="Mignone F."/>
            <person name="Miyake S."/>
            <person name="Morris K."/>
            <person name="Mottagui-Tabar S."/>
            <person name="Mulder N."/>
            <person name="Nakano N."/>
            <person name="Nakauchi H."/>
            <person name="Ng P."/>
            <person name="Nilsson R."/>
            <person name="Nishiguchi S."/>
            <person name="Nishikawa S."/>
            <person name="Nori F."/>
            <person name="Ohara O."/>
            <person name="Okazaki Y."/>
            <person name="Orlando V."/>
            <person name="Pang K.C."/>
            <person name="Pavan W.J."/>
            <person name="Pavesi G."/>
            <person name="Pesole G."/>
            <person name="Petrovsky N."/>
            <person name="Piazza S."/>
            <person name="Reed J."/>
            <person name="Reid J.F."/>
            <person name="Ring B.Z."/>
            <person name="Ringwald M."/>
            <person name="Rost B."/>
            <person name="Ruan Y."/>
            <person name="Salzberg S.L."/>
            <person name="Sandelin A."/>
            <person name="Schneider C."/>
            <person name="Schoenbach C."/>
            <person name="Sekiguchi K."/>
            <person name="Semple C.A."/>
            <person name="Seno S."/>
            <person name="Sessa L."/>
            <person name="Sheng Y."/>
            <person name="Shibata Y."/>
            <person name="Shimada H."/>
            <person name="Shimada K."/>
            <person name="Silva D."/>
            <person name="Sinclair B."/>
            <person name="Sperling S."/>
            <person name="Stupka E."/>
            <person name="Sugiura K."/>
            <person name="Sultana R."/>
            <person name="Takenaka Y."/>
            <person name="Taki K."/>
            <person name="Tammoja K."/>
            <person name="Tan S.L."/>
            <person name="Tang S."/>
            <person name="Taylor M.S."/>
            <person name="Tegner J."/>
            <person name="Teichmann S.A."/>
            <person name="Ueda H.R."/>
            <person name="van Nimwegen E."/>
            <person name="Verardo R."/>
            <person name="Wei C.L."/>
            <person name="Yagi K."/>
            <person name="Yamanishi H."/>
            <person name="Zabarovsky E."/>
            <person name="Zhu S."/>
            <person name="Zimmer A."/>
            <person name="Hide W."/>
            <person name="Bult C."/>
            <person name="Grimmond S.M."/>
            <person name="Teasdale R.D."/>
            <person name="Liu E.T."/>
            <person name="Brusic V."/>
            <person name="Quackenbush J."/>
            <person name="Wahlestedt C."/>
            <person name="Mattick J.S."/>
            <person name="Hume D.A."/>
            <person name="Kai C."/>
            <person name="Sasaki D."/>
            <person name="Tomaru Y."/>
            <person name="Fukuda S."/>
            <person name="Kanamori-Katayama M."/>
            <person name="Suzuki M."/>
            <person name="Aoki J."/>
            <person name="Arakawa T."/>
            <person name="Iida J."/>
            <person name="Imamura K."/>
            <person name="Itoh M."/>
            <person name="Kato T."/>
            <person name="Kawaji H."/>
            <person name="Kawagashira N."/>
            <person name="Kawashima T."/>
            <person name="Kojima M."/>
            <person name="Kondo S."/>
            <person name="Konno H."/>
            <person name="Nakano K."/>
            <person name="Ninomiya N."/>
            <person name="Nishio T."/>
            <person name="Okada M."/>
            <person name="Plessy C."/>
            <person name="Shibata K."/>
            <person name="Shiraki T."/>
            <person name="Suzuki S."/>
            <person name="Tagami M."/>
            <person name="Waki K."/>
            <person name="Watahiki A."/>
            <person name="Okamura-Oho Y."/>
            <person name="Suzuki H."/>
            <person name="Kawai J."/>
            <person name="Hayashizaki Y."/>
        </authorList>
    </citation>
    <scope>NUCLEOTIDE SEQUENCE [LARGE SCALE MRNA]</scope>
    <source>
        <strain evidence="5">C57BL/6J</strain>
        <strain evidence="6">NOD</strain>
        <tissue evidence="5">Colon</tissue>
        <tissue evidence="6">Thymus</tissue>
    </source>
</reference>
<reference key="2">
    <citation type="journal article" date="2004" name="Genome Res.">
        <title>The status, quality, and expansion of the NIH full-length cDNA project: the Mammalian Gene Collection (MGC).</title>
        <authorList>
            <consortium name="The MGC Project Team"/>
        </authorList>
    </citation>
    <scope>NUCLEOTIDE SEQUENCE [LARGE SCALE MRNA]</scope>
    <source>
        <strain evidence="4">FVB/N</strain>
        <tissue evidence="4">Mammary tumor</tissue>
    </source>
</reference>
<reference key="3">
    <citation type="journal article" date="2004" name="Mol. Cell. Proteomics">
        <title>Phosphoproteomic analysis of the developing mouse brain.</title>
        <authorList>
            <person name="Ballif B.A."/>
            <person name="Villen J."/>
            <person name="Beausoleil S.A."/>
            <person name="Schwartz D."/>
            <person name="Gygi S.P."/>
        </authorList>
    </citation>
    <scope>PHOSPHORYLATION [LARGE SCALE ANALYSIS] AT SER-132 AND SER-133</scope>
    <scope>IDENTIFICATION BY MASS SPECTROMETRY [LARGE SCALE ANALYSIS]</scope>
    <source>
        <tissue>Embryonic brain</tissue>
    </source>
</reference>
<reference key="4">
    <citation type="journal article" date="2007" name="Proc. Natl. Acad. Sci. U.S.A.">
        <title>Large-scale phosphorylation analysis of mouse liver.</title>
        <authorList>
            <person name="Villen J."/>
            <person name="Beausoleil S.A."/>
            <person name="Gerber S.A."/>
            <person name="Gygi S.P."/>
        </authorList>
    </citation>
    <scope>PHOSPHORYLATION [LARGE SCALE ANALYSIS] AT SER-52; SER-53; SER-116 AND SER-132</scope>
    <scope>IDENTIFICATION BY MASS SPECTROMETRY [LARGE SCALE ANALYSIS]</scope>
    <source>
        <tissue>Liver</tissue>
    </source>
</reference>
<reference key="5">
    <citation type="journal article" date="2009" name="Immunity">
        <title>The phagosomal proteome in interferon-gamma-activated macrophages.</title>
        <authorList>
            <person name="Trost M."/>
            <person name="English L."/>
            <person name="Lemieux S."/>
            <person name="Courcelles M."/>
            <person name="Desjardins M."/>
            <person name="Thibault P."/>
        </authorList>
    </citation>
    <scope>PHOSPHORYLATION [LARGE SCALE ANALYSIS] AT SER-132 AND SER-133</scope>
    <scope>IDENTIFICATION BY MASS SPECTROMETRY [LARGE SCALE ANALYSIS]</scope>
</reference>
<reference key="6">
    <citation type="journal article" date="2009" name="Mol. Cell. Proteomics">
        <title>Large scale localization of protein phosphorylation by use of electron capture dissociation mass spectrometry.</title>
        <authorList>
            <person name="Sweet S.M."/>
            <person name="Bailey C.M."/>
            <person name="Cunningham D.L."/>
            <person name="Heath J.K."/>
            <person name="Cooper H.J."/>
        </authorList>
    </citation>
    <scope>PHOSPHORYLATION [LARGE SCALE ANALYSIS] AT THR-267</scope>
    <scope>IDENTIFICATION BY MASS SPECTROMETRY [LARGE SCALE ANALYSIS]</scope>
    <source>
        <tissue>Embryonic fibroblast</tissue>
    </source>
</reference>
<reference key="7">
    <citation type="journal article" date="2010" name="Cell">
        <title>A tissue-specific atlas of mouse protein phosphorylation and expression.</title>
        <authorList>
            <person name="Huttlin E.L."/>
            <person name="Jedrychowski M.P."/>
            <person name="Elias J.E."/>
            <person name="Goswami T."/>
            <person name="Rad R."/>
            <person name="Beausoleil S.A."/>
            <person name="Villen J."/>
            <person name="Haas W."/>
            <person name="Sowa M.E."/>
            <person name="Gygi S.P."/>
        </authorList>
    </citation>
    <scope>PHOSPHORYLATION [LARGE SCALE ANALYSIS] AT SER-52; SER-53; SER-116; SER-132 AND THR-267</scope>
    <scope>IDENTIFICATION BY MASS SPECTROMETRY [LARGE SCALE ANALYSIS]</scope>
    <source>
        <tissue>Brain</tissue>
        <tissue>Brown adipose tissue</tissue>
        <tissue>Heart</tissue>
        <tissue>Kidney</tissue>
        <tissue>Liver</tissue>
        <tissue>Lung</tissue>
        <tissue>Pancreas</tissue>
        <tissue>Spleen</tissue>
        <tissue>Testis</tissue>
    </source>
</reference>
<evidence type="ECO:0000250" key="1">
    <source>
        <dbReference type="UniProtKB" id="P55081"/>
    </source>
</evidence>
<evidence type="ECO:0000256" key="2">
    <source>
        <dbReference type="SAM" id="MobiDB-lite"/>
    </source>
</evidence>
<evidence type="ECO:0000305" key="3"/>
<evidence type="ECO:0000312" key="4">
    <source>
        <dbReference type="EMBL" id="AAH05728.1"/>
    </source>
</evidence>
<evidence type="ECO:0000312" key="5">
    <source>
        <dbReference type="EMBL" id="BAB31249.1"/>
    </source>
</evidence>
<evidence type="ECO:0000312" key="6">
    <source>
        <dbReference type="EMBL" id="BAC40667.1"/>
    </source>
</evidence>
<evidence type="ECO:0000312" key="7">
    <source>
        <dbReference type="MGI" id="MGI:3694697"/>
    </source>
</evidence>
<evidence type="ECO:0007744" key="8">
    <source>
    </source>
</evidence>
<evidence type="ECO:0007744" key="9">
    <source>
    </source>
</evidence>
<evidence type="ECO:0007744" key="10">
    <source>
    </source>
</evidence>
<evidence type="ECO:0007744" key="11">
    <source>
    </source>
</evidence>
<evidence type="ECO:0007744" key="12">
    <source>
    </source>
</evidence>
<accession>C0HKD9</accession>
<accession>Q3TU29</accession>
<accession>Q8CCL1</accession>
<accession>Q9CQU1</accession>
<accession>Q9CSJ5</accession>
<protein>
    <recommendedName>
        <fullName evidence="7">Microfibrillar-associated protein 1B</fullName>
    </recommendedName>
    <alternativeName>
        <fullName evidence="3">Spliceosome B complex protein MFAP1B</fullName>
    </alternativeName>
</protein>